<reference key="1">
    <citation type="submission" date="2008-05" db="EMBL/GenBank/DDBJ databases">
        <title>Complete sequence of Shigella boydii serotype 18 strain BS512.</title>
        <authorList>
            <person name="Rasko D.A."/>
            <person name="Rosovitz M."/>
            <person name="Maurelli A.T."/>
            <person name="Myers G."/>
            <person name="Seshadri R."/>
            <person name="Cer R."/>
            <person name="Jiang L."/>
            <person name="Ravel J."/>
            <person name="Sebastian Y."/>
        </authorList>
    </citation>
    <scope>NUCLEOTIDE SEQUENCE [LARGE SCALE GENOMIC DNA]</scope>
    <source>
        <strain>CDC 3083-94 / BS512</strain>
    </source>
</reference>
<name>SYA_SHIB3</name>
<protein>
    <recommendedName>
        <fullName evidence="1">Alanine--tRNA ligase</fullName>
        <ecNumber evidence="1">6.1.1.7</ecNumber>
    </recommendedName>
    <alternativeName>
        <fullName evidence="1">Alanyl-tRNA synthetase</fullName>
        <shortName evidence="1">AlaRS</shortName>
    </alternativeName>
</protein>
<feature type="chain" id="PRO_0000347796" description="Alanine--tRNA ligase">
    <location>
        <begin position="1"/>
        <end position="876"/>
    </location>
</feature>
<feature type="binding site" evidence="1">
    <location>
        <position position="564"/>
    </location>
    <ligand>
        <name>Zn(2+)</name>
        <dbReference type="ChEBI" id="CHEBI:29105"/>
    </ligand>
</feature>
<feature type="binding site" evidence="1">
    <location>
        <position position="568"/>
    </location>
    <ligand>
        <name>Zn(2+)</name>
        <dbReference type="ChEBI" id="CHEBI:29105"/>
    </ligand>
</feature>
<feature type="binding site" evidence="1">
    <location>
        <position position="666"/>
    </location>
    <ligand>
        <name>Zn(2+)</name>
        <dbReference type="ChEBI" id="CHEBI:29105"/>
    </ligand>
</feature>
<feature type="binding site" evidence="1">
    <location>
        <position position="670"/>
    </location>
    <ligand>
        <name>Zn(2+)</name>
        <dbReference type="ChEBI" id="CHEBI:29105"/>
    </ligand>
</feature>
<feature type="modified residue" description="N6-acetyllysine" evidence="1">
    <location>
        <position position="74"/>
    </location>
</feature>
<dbReference type="EC" id="6.1.1.7" evidence="1"/>
<dbReference type="EMBL" id="CP001063">
    <property type="protein sequence ID" value="ACD10528.1"/>
    <property type="molecule type" value="Genomic_DNA"/>
</dbReference>
<dbReference type="RefSeq" id="WP_000047186.1">
    <property type="nucleotide sequence ID" value="NC_010658.1"/>
</dbReference>
<dbReference type="SMR" id="B2U049"/>
<dbReference type="STRING" id="344609.SbBS512_E3180"/>
<dbReference type="KEGG" id="sbc:SbBS512_E3180"/>
<dbReference type="HOGENOM" id="CLU_004485_1_1_6"/>
<dbReference type="Proteomes" id="UP000001030">
    <property type="component" value="Chromosome"/>
</dbReference>
<dbReference type="GO" id="GO:0005829">
    <property type="term" value="C:cytosol"/>
    <property type="evidence" value="ECO:0007669"/>
    <property type="project" value="TreeGrafter"/>
</dbReference>
<dbReference type="GO" id="GO:0004813">
    <property type="term" value="F:alanine-tRNA ligase activity"/>
    <property type="evidence" value="ECO:0007669"/>
    <property type="project" value="UniProtKB-UniRule"/>
</dbReference>
<dbReference type="GO" id="GO:0002161">
    <property type="term" value="F:aminoacyl-tRNA deacylase activity"/>
    <property type="evidence" value="ECO:0007669"/>
    <property type="project" value="TreeGrafter"/>
</dbReference>
<dbReference type="GO" id="GO:0005524">
    <property type="term" value="F:ATP binding"/>
    <property type="evidence" value="ECO:0007669"/>
    <property type="project" value="UniProtKB-UniRule"/>
</dbReference>
<dbReference type="GO" id="GO:0000049">
    <property type="term" value="F:tRNA binding"/>
    <property type="evidence" value="ECO:0007669"/>
    <property type="project" value="UniProtKB-KW"/>
</dbReference>
<dbReference type="GO" id="GO:0008270">
    <property type="term" value="F:zinc ion binding"/>
    <property type="evidence" value="ECO:0007669"/>
    <property type="project" value="UniProtKB-UniRule"/>
</dbReference>
<dbReference type="GO" id="GO:0006419">
    <property type="term" value="P:alanyl-tRNA aminoacylation"/>
    <property type="evidence" value="ECO:0007669"/>
    <property type="project" value="UniProtKB-UniRule"/>
</dbReference>
<dbReference type="GO" id="GO:0045892">
    <property type="term" value="P:negative regulation of DNA-templated transcription"/>
    <property type="evidence" value="ECO:0007669"/>
    <property type="project" value="TreeGrafter"/>
</dbReference>
<dbReference type="CDD" id="cd00673">
    <property type="entry name" value="AlaRS_core"/>
    <property type="match status" value="1"/>
</dbReference>
<dbReference type="FunFam" id="2.40.30.130:FF:000001">
    <property type="entry name" value="Alanine--tRNA ligase"/>
    <property type="match status" value="1"/>
</dbReference>
<dbReference type="FunFam" id="3.10.310.40:FF:000001">
    <property type="entry name" value="Alanine--tRNA ligase"/>
    <property type="match status" value="1"/>
</dbReference>
<dbReference type="FunFam" id="3.30.54.20:FF:000001">
    <property type="entry name" value="Alanine--tRNA ligase"/>
    <property type="match status" value="1"/>
</dbReference>
<dbReference type="FunFam" id="3.30.930.10:FF:000004">
    <property type="entry name" value="Alanine--tRNA ligase"/>
    <property type="match status" value="1"/>
</dbReference>
<dbReference type="FunFam" id="3.30.980.10:FF:000004">
    <property type="entry name" value="Alanine--tRNA ligase, cytoplasmic"/>
    <property type="match status" value="1"/>
</dbReference>
<dbReference type="Gene3D" id="2.40.30.130">
    <property type="match status" value="1"/>
</dbReference>
<dbReference type="Gene3D" id="3.10.310.40">
    <property type="match status" value="1"/>
</dbReference>
<dbReference type="Gene3D" id="3.30.54.20">
    <property type="match status" value="1"/>
</dbReference>
<dbReference type="Gene3D" id="6.10.250.550">
    <property type="match status" value="1"/>
</dbReference>
<dbReference type="Gene3D" id="3.30.930.10">
    <property type="entry name" value="Bira Bifunctional Protein, Domain 2"/>
    <property type="match status" value="1"/>
</dbReference>
<dbReference type="Gene3D" id="3.30.980.10">
    <property type="entry name" value="Threonyl-trna Synthetase, Chain A, domain 2"/>
    <property type="match status" value="1"/>
</dbReference>
<dbReference type="HAMAP" id="MF_00036_B">
    <property type="entry name" value="Ala_tRNA_synth_B"/>
    <property type="match status" value="1"/>
</dbReference>
<dbReference type="InterPro" id="IPR045864">
    <property type="entry name" value="aa-tRNA-synth_II/BPL/LPL"/>
</dbReference>
<dbReference type="InterPro" id="IPR002318">
    <property type="entry name" value="Ala-tRNA-lgiase_IIc"/>
</dbReference>
<dbReference type="InterPro" id="IPR018162">
    <property type="entry name" value="Ala-tRNA-ligase_IIc_anticod-bd"/>
</dbReference>
<dbReference type="InterPro" id="IPR018165">
    <property type="entry name" value="Ala-tRNA-synth_IIc_core"/>
</dbReference>
<dbReference type="InterPro" id="IPR018164">
    <property type="entry name" value="Ala-tRNA-synth_IIc_N"/>
</dbReference>
<dbReference type="InterPro" id="IPR050058">
    <property type="entry name" value="Ala-tRNA_ligase"/>
</dbReference>
<dbReference type="InterPro" id="IPR023033">
    <property type="entry name" value="Ala_tRNA_ligase_euk/bac"/>
</dbReference>
<dbReference type="InterPro" id="IPR003156">
    <property type="entry name" value="DHHA1_dom"/>
</dbReference>
<dbReference type="InterPro" id="IPR018163">
    <property type="entry name" value="Thr/Ala-tRNA-synth_IIc_edit"/>
</dbReference>
<dbReference type="InterPro" id="IPR009000">
    <property type="entry name" value="Transl_B-barrel_sf"/>
</dbReference>
<dbReference type="InterPro" id="IPR012947">
    <property type="entry name" value="tRNA_SAD"/>
</dbReference>
<dbReference type="NCBIfam" id="TIGR00344">
    <property type="entry name" value="alaS"/>
    <property type="match status" value="1"/>
</dbReference>
<dbReference type="PANTHER" id="PTHR11777:SF9">
    <property type="entry name" value="ALANINE--TRNA LIGASE, CYTOPLASMIC"/>
    <property type="match status" value="1"/>
</dbReference>
<dbReference type="PANTHER" id="PTHR11777">
    <property type="entry name" value="ALANYL-TRNA SYNTHETASE"/>
    <property type="match status" value="1"/>
</dbReference>
<dbReference type="Pfam" id="PF02272">
    <property type="entry name" value="DHHA1"/>
    <property type="match status" value="1"/>
</dbReference>
<dbReference type="Pfam" id="PF01411">
    <property type="entry name" value="tRNA-synt_2c"/>
    <property type="match status" value="1"/>
</dbReference>
<dbReference type="Pfam" id="PF07973">
    <property type="entry name" value="tRNA_SAD"/>
    <property type="match status" value="1"/>
</dbReference>
<dbReference type="PRINTS" id="PR00980">
    <property type="entry name" value="TRNASYNTHALA"/>
</dbReference>
<dbReference type="SMART" id="SM00863">
    <property type="entry name" value="tRNA_SAD"/>
    <property type="match status" value="1"/>
</dbReference>
<dbReference type="SUPFAM" id="SSF55681">
    <property type="entry name" value="Class II aaRS and biotin synthetases"/>
    <property type="match status" value="1"/>
</dbReference>
<dbReference type="SUPFAM" id="SSF101353">
    <property type="entry name" value="Putative anticodon-binding domain of alanyl-tRNA synthetase (AlaRS)"/>
    <property type="match status" value="1"/>
</dbReference>
<dbReference type="SUPFAM" id="SSF55186">
    <property type="entry name" value="ThrRS/AlaRS common domain"/>
    <property type="match status" value="1"/>
</dbReference>
<dbReference type="SUPFAM" id="SSF50447">
    <property type="entry name" value="Translation proteins"/>
    <property type="match status" value="1"/>
</dbReference>
<dbReference type="PROSITE" id="PS50860">
    <property type="entry name" value="AA_TRNA_LIGASE_II_ALA"/>
    <property type="match status" value="1"/>
</dbReference>
<sequence length="876" mass="96032">MSKSTAEIRQAFLDFFHSKGHQVVASSSLVPHNDPTLLFTNAGMNQFKDVFLGLDKRNYSRATTSQRCVRAGGKHNDLENVGYTARHHTFFEMLGNFSFGDYFKHDAIQFAWELLTSEKWFALPKERLWVTVYESDDEAYEIWEKEVGIPRERIIRIGDNKGAPYASDNFWQMGDTGPCGPCTEIFYDHGDHIWGGPPGSPEEDGDRYIEIWNIVFMQFNRQADGTMEPLPKPSVDTGMGLERIAAVLQHVNSNYDIDLFRTLIQAVAKVTGATDLSNKSLRVIADHIRSCAFLIADGVMPSNENRGYVLRRIIRRAVRHGNMLGAKETFFYKLVGPLIDVMGSAGEDLKRQQAQVEQVLKTEEEQFARTLERGLALLDEELAKLSGDTLDGETAFRLYDTYGFPVDLTADVCRERNIKVDEAGFEAAMEEQRRRAREASGFGADYNAMIRVDSASEFKGYDHLELNGKVTALFVDGKAVDAINAGQEAVVVLDQTPFYAESGGQVGDKGELKGANFSFAVEDTQKYGQAIGHIGKLAAGSLKVGDAVQADVDEARRARIRLNHSATHLMHAALRQVLGTHVSQKGSLVNDKVLRFDFSHNEAMKPEEIRVVEDLVNAQIRRNLPIETNIMDLEAAKAKGAMALFGEKYDERVRVLSMGDFSTELCGGTHASRTGDIGLFRIISESGTAAGVRRIEAVTGEGAITTVHADSDRLSEVAHLLKGDSNNLADKVRSVLERTRQLEKELQQLKEQAAAQESANLSSKAIDVNGVKLLVSELSGVEPKMLRTMVDDLKNQLGSTIIVLATVAEGKVSLIAGVSKDVTDRVKAGELIGMVAQQVGGKGGGRPDMAQAGGTDAAALPAALASVKGWVSAKLQ</sequence>
<evidence type="ECO:0000255" key="1">
    <source>
        <dbReference type="HAMAP-Rule" id="MF_00036"/>
    </source>
</evidence>
<comment type="function">
    <text evidence="1">Catalyzes the attachment of alanine to tRNA(Ala) in a two-step reaction: alanine is first activated by ATP to form Ala-AMP and then transferred to the acceptor end of tRNA(Ala). Also edits incorrectly charged Ser-tRNA(Ala) and Gly-tRNA(Ala) via its editing domain.</text>
</comment>
<comment type="catalytic activity">
    <reaction evidence="1">
        <text>tRNA(Ala) + L-alanine + ATP = L-alanyl-tRNA(Ala) + AMP + diphosphate</text>
        <dbReference type="Rhea" id="RHEA:12540"/>
        <dbReference type="Rhea" id="RHEA-COMP:9657"/>
        <dbReference type="Rhea" id="RHEA-COMP:9923"/>
        <dbReference type="ChEBI" id="CHEBI:30616"/>
        <dbReference type="ChEBI" id="CHEBI:33019"/>
        <dbReference type="ChEBI" id="CHEBI:57972"/>
        <dbReference type="ChEBI" id="CHEBI:78442"/>
        <dbReference type="ChEBI" id="CHEBI:78497"/>
        <dbReference type="ChEBI" id="CHEBI:456215"/>
        <dbReference type="EC" id="6.1.1.7"/>
    </reaction>
</comment>
<comment type="cofactor">
    <cofactor evidence="1">
        <name>Zn(2+)</name>
        <dbReference type="ChEBI" id="CHEBI:29105"/>
    </cofactor>
    <text evidence="1">Binds 1 zinc ion per subunit.</text>
</comment>
<comment type="subunit">
    <text evidence="1">Homotetramer.</text>
</comment>
<comment type="subcellular location">
    <subcellularLocation>
        <location evidence="1">Cytoplasm</location>
    </subcellularLocation>
</comment>
<comment type="domain">
    <text evidence="1">Consists of three domains; the N-terminal catalytic domain, the editing domain and the C-terminal C-Ala domain. The editing domain removes incorrectly charged amino acids, while the C-Ala domain, along with tRNA(Ala), serves as a bridge to cooperatively bring together the editing and aminoacylation centers thus stimulating deacylation of misacylated tRNAs.</text>
</comment>
<comment type="similarity">
    <text evidence="1">Belongs to the class-II aminoacyl-tRNA synthetase family.</text>
</comment>
<gene>
    <name evidence="1" type="primary">alaS</name>
    <name type="ordered locus">SbBS512_E3180</name>
</gene>
<keyword id="KW-0007">Acetylation</keyword>
<keyword id="KW-0030">Aminoacyl-tRNA synthetase</keyword>
<keyword id="KW-0067">ATP-binding</keyword>
<keyword id="KW-0963">Cytoplasm</keyword>
<keyword id="KW-0436">Ligase</keyword>
<keyword id="KW-0479">Metal-binding</keyword>
<keyword id="KW-0547">Nucleotide-binding</keyword>
<keyword id="KW-0648">Protein biosynthesis</keyword>
<keyword id="KW-1185">Reference proteome</keyword>
<keyword id="KW-0694">RNA-binding</keyword>
<keyword id="KW-0820">tRNA-binding</keyword>
<keyword id="KW-0862">Zinc</keyword>
<accession>B2U049</accession>
<proteinExistence type="inferred from homology"/>
<organism>
    <name type="scientific">Shigella boydii serotype 18 (strain CDC 3083-94 / BS512)</name>
    <dbReference type="NCBI Taxonomy" id="344609"/>
    <lineage>
        <taxon>Bacteria</taxon>
        <taxon>Pseudomonadati</taxon>
        <taxon>Pseudomonadota</taxon>
        <taxon>Gammaproteobacteria</taxon>
        <taxon>Enterobacterales</taxon>
        <taxon>Enterobacteriaceae</taxon>
        <taxon>Shigella</taxon>
    </lineage>
</organism>